<dbReference type="EC" id="2.4.2.18" evidence="1"/>
<dbReference type="EMBL" id="CP000009">
    <property type="protein sequence ID" value="AAW62020.1"/>
    <property type="molecule type" value="Genomic_DNA"/>
</dbReference>
<dbReference type="RefSeq" id="WP_011253790.1">
    <property type="nucleotide sequence ID" value="NC_006677.1"/>
</dbReference>
<dbReference type="SMR" id="Q5FNM7"/>
<dbReference type="STRING" id="290633.GOX2287"/>
<dbReference type="KEGG" id="gox:GOX2287"/>
<dbReference type="eggNOG" id="COG0547">
    <property type="taxonomic scope" value="Bacteria"/>
</dbReference>
<dbReference type="HOGENOM" id="CLU_034315_2_1_5"/>
<dbReference type="UniPathway" id="UPA00035">
    <property type="reaction ID" value="UER00041"/>
</dbReference>
<dbReference type="Proteomes" id="UP000006375">
    <property type="component" value="Chromosome"/>
</dbReference>
<dbReference type="GO" id="GO:0005829">
    <property type="term" value="C:cytosol"/>
    <property type="evidence" value="ECO:0007669"/>
    <property type="project" value="TreeGrafter"/>
</dbReference>
<dbReference type="GO" id="GO:0004048">
    <property type="term" value="F:anthranilate phosphoribosyltransferase activity"/>
    <property type="evidence" value="ECO:0007669"/>
    <property type="project" value="UniProtKB-UniRule"/>
</dbReference>
<dbReference type="GO" id="GO:0000287">
    <property type="term" value="F:magnesium ion binding"/>
    <property type="evidence" value="ECO:0007669"/>
    <property type="project" value="UniProtKB-UniRule"/>
</dbReference>
<dbReference type="GO" id="GO:0000162">
    <property type="term" value="P:L-tryptophan biosynthetic process"/>
    <property type="evidence" value="ECO:0007669"/>
    <property type="project" value="UniProtKB-UniRule"/>
</dbReference>
<dbReference type="Gene3D" id="3.40.1030.10">
    <property type="entry name" value="Nucleoside phosphorylase/phosphoribosyltransferase catalytic domain"/>
    <property type="match status" value="1"/>
</dbReference>
<dbReference type="Gene3D" id="1.20.970.10">
    <property type="entry name" value="Transferase, Pyrimidine Nucleoside Phosphorylase, Chain C"/>
    <property type="match status" value="1"/>
</dbReference>
<dbReference type="HAMAP" id="MF_00211">
    <property type="entry name" value="TrpD"/>
    <property type="match status" value="1"/>
</dbReference>
<dbReference type="InterPro" id="IPR005940">
    <property type="entry name" value="Anthranilate_Pribosyl_Tfrase"/>
</dbReference>
<dbReference type="InterPro" id="IPR000312">
    <property type="entry name" value="Glycosyl_Trfase_fam3"/>
</dbReference>
<dbReference type="InterPro" id="IPR017459">
    <property type="entry name" value="Glycosyl_Trfase_fam3_N_dom"/>
</dbReference>
<dbReference type="InterPro" id="IPR036320">
    <property type="entry name" value="Glycosyl_Trfase_fam3_N_dom_sf"/>
</dbReference>
<dbReference type="InterPro" id="IPR035902">
    <property type="entry name" value="Nuc_phospho_transferase"/>
</dbReference>
<dbReference type="NCBIfam" id="TIGR01245">
    <property type="entry name" value="trpD"/>
    <property type="match status" value="1"/>
</dbReference>
<dbReference type="PANTHER" id="PTHR43285">
    <property type="entry name" value="ANTHRANILATE PHOSPHORIBOSYLTRANSFERASE"/>
    <property type="match status" value="1"/>
</dbReference>
<dbReference type="PANTHER" id="PTHR43285:SF2">
    <property type="entry name" value="ANTHRANILATE PHOSPHORIBOSYLTRANSFERASE"/>
    <property type="match status" value="1"/>
</dbReference>
<dbReference type="Pfam" id="PF02885">
    <property type="entry name" value="Glycos_trans_3N"/>
    <property type="match status" value="1"/>
</dbReference>
<dbReference type="Pfam" id="PF00591">
    <property type="entry name" value="Glycos_transf_3"/>
    <property type="match status" value="1"/>
</dbReference>
<dbReference type="SUPFAM" id="SSF52418">
    <property type="entry name" value="Nucleoside phosphorylase/phosphoribosyltransferase catalytic domain"/>
    <property type="match status" value="1"/>
</dbReference>
<dbReference type="SUPFAM" id="SSF47648">
    <property type="entry name" value="Nucleoside phosphorylase/phosphoribosyltransferase N-terminal domain"/>
    <property type="match status" value="1"/>
</dbReference>
<gene>
    <name evidence="1" type="primary">trpD</name>
    <name type="ordered locus">GOX2287</name>
</gene>
<keyword id="KW-0028">Amino-acid biosynthesis</keyword>
<keyword id="KW-0057">Aromatic amino acid biosynthesis</keyword>
<keyword id="KW-0328">Glycosyltransferase</keyword>
<keyword id="KW-0460">Magnesium</keyword>
<keyword id="KW-0479">Metal-binding</keyword>
<keyword id="KW-1185">Reference proteome</keyword>
<keyword id="KW-0808">Transferase</keyword>
<keyword id="KW-0822">Tryptophan biosynthesis</keyword>
<feature type="chain" id="PRO_0000227161" description="Anthranilate phosphoribosyltransferase">
    <location>
        <begin position="1"/>
        <end position="363"/>
    </location>
</feature>
<feature type="binding site" evidence="1">
    <location>
        <position position="85"/>
    </location>
    <ligand>
        <name>5-phospho-alpha-D-ribose 1-diphosphate</name>
        <dbReference type="ChEBI" id="CHEBI:58017"/>
    </ligand>
</feature>
<feature type="binding site" evidence="1">
    <location>
        <position position="85"/>
    </location>
    <ligand>
        <name>anthranilate</name>
        <dbReference type="ChEBI" id="CHEBI:16567"/>
        <label>1</label>
    </ligand>
</feature>
<feature type="binding site" evidence="1">
    <location>
        <begin position="88"/>
        <end position="89"/>
    </location>
    <ligand>
        <name>5-phospho-alpha-D-ribose 1-diphosphate</name>
        <dbReference type="ChEBI" id="CHEBI:58017"/>
    </ligand>
</feature>
<feature type="binding site" evidence="1">
    <location>
        <position position="93"/>
    </location>
    <ligand>
        <name>5-phospho-alpha-D-ribose 1-diphosphate</name>
        <dbReference type="ChEBI" id="CHEBI:58017"/>
    </ligand>
</feature>
<feature type="binding site" evidence="1">
    <location>
        <begin position="95"/>
        <end position="98"/>
    </location>
    <ligand>
        <name>5-phospho-alpha-D-ribose 1-diphosphate</name>
        <dbReference type="ChEBI" id="CHEBI:58017"/>
    </ligand>
</feature>
<feature type="binding site" evidence="1">
    <location>
        <position position="97"/>
    </location>
    <ligand>
        <name>Mg(2+)</name>
        <dbReference type="ChEBI" id="CHEBI:18420"/>
        <label>1</label>
    </ligand>
</feature>
<feature type="binding site" evidence="1">
    <location>
        <begin position="113"/>
        <end position="121"/>
    </location>
    <ligand>
        <name>5-phospho-alpha-D-ribose 1-diphosphate</name>
        <dbReference type="ChEBI" id="CHEBI:58017"/>
    </ligand>
</feature>
<feature type="binding site" evidence="1">
    <location>
        <position position="116"/>
    </location>
    <ligand>
        <name>anthranilate</name>
        <dbReference type="ChEBI" id="CHEBI:16567"/>
        <label>1</label>
    </ligand>
</feature>
<feature type="binding site" evidence="1">
    <location>
        <position position="125"/>
    </location>
    <ligand>
        <name>5-phospho-alpha-D-ribose 1-diphosphate</name>
        <dbReference type="ChEBI" id="CHEBI:58017"/>
    </ligand>
</feature>
<feature type="binding site" evidence="1">
    <location>
        <position position="171"/>
    </location>
    <ligand>
        <name>anthranilate</name>
        <dbReference type="ChEBI" id="CHEBI:16567"/>
        <label>2</label>
    </ligand>
</feature>
<feature type="binding site" evidence="1">
    <location>
        <position position="233"/>
    </location>
    <ligand>
        <name>Mg(2+)</name>
        <dbReference type="ChEBI" id="CHEBI:18420"/>
        <label>2</label>
    </ligand>
</feature>
<feature type="binding site" evidence="1">
    <location>
        <position position="234"/>
    </location>
    <ligand>
        <name>Mg(2+)</name>
        <dbReference type="ChEBI" id="CHEBI:18420"/>
        <label>1</label>
    </ligand>
</feature>
<feature type="binding site" evidence="1">
    <location>
        <position position="234"/>
    </location>
    <ligand>
        <name>Mg(2+)</name>
        <dbReference type="ChEBI" id="CHEBI:18420"/>
        <label>2</label>
    </ligand>
</feature>
<sequence length="363" mass="37503">MTVSADFTPLLHKAALGRPLDSHEAETAFHAIMAGEVDPVQLAAFLTALKLRGETFAELTGAVQAVRHHMTVLPDVPAGAIDVCGTGGDGLKTLNVSTAVAFVLAGLGVPVAKHGNRALSSASGATDVLEVLGIPPTDDLELQGRRLREDGLVFLAAPQHHPAMRHAAPVRKALGFRTLFNLLGPLCNPAQVRHQLIGVFDGRWCEPVARALGALGSLSVWVVHGSTEEGGSDELTLAGPSQVSAWQDETLFSFRIEPDMAGLAAAPISAIRGGDAQTNAAALLALLDGAGGAYRDTVLLNAAAALHVAGRGDIVKAGVIDVPAFRRNVGMAADSIDRGLARAALEAARMSAHSIAPKDAGRS</sequence>
<name>TRPD_GLUOX</name>
<reference key="1">
    <citation type="journal article" date="2005" name="Nat. Biotechnol.">
        <title>Complete genome sequence of the acetic acid bacterium Gluconobacter oxydans.</title>
        <authorList>
            <person name="Prust C."/>
            <person name="Hoffmeister M."/>
            <person name="Liesegang H."/>
            <person name="Wiezer A."/>
            <person name="Fricke W.F."/>
            <person name="Ehrenreich A."/>
            <person name="Gottschalk G."/>
            <person name="Deppenmeier U."/>
        </authorList>
    </citation>
    <scope>NUCLEOTIDE SEQUENCE [LARGE SCALE GENOMIC DNA]</scope>
    <source>
        <strain>621H</strain>
    </source>
</reference>
<comment type="function">
    <text evidence="1">Catalyzes the transfer of the phosphoribosyl group of 5-phosphorylribose-1-pyrophosphate (PRPP) to anthranilate to yield N-(5'-phosphoribosyl)-anthranilate (PRA).</text>
</comment>
<comment type="catalytic activity">
    <reaction evidence="1">
        <text>N-(5-phospho-beta-D-ribosyl)anthranilate + diphosphate = 5-phospho-alpha-D-ribose 1-diphosphate + anthranilate</text>
        <dbReference type="Rhea" id="RHEA:11768"/>
        <dbReference type="ChEBI" id="CHEBI:16567"/>
        <dbReference type="ChEBI" id="CHEBI:18277"/>
        <dbReference type="ChEBI" id="CHEBI:33019"/>
        <dbReference type="ChEBI" id="CHEBI:58017"/>
        <dbReference type="EC" id="2.4.2.18"/>
    </reaction>
</comment>
<comment type="cofactor">
    <cofactor evidence="1">
        <name>Mg(2+)</name>
        <dbReference type="ChEBI" id="CHEBI:18420"/>
    </cofactor>
    <text evidence="1">Binds 2 magnesium ions per monomer.</text>
</comment>
<comment type="pathway">
    <text evidence="1">Amino-acid biosynthesis; L-tryptophan biosynthesis; L-tryptophan from chorismate: step 2/5.</text>
</comment>
<comment type="subunit">
    <text evidence="1">Homodimer.</text>
</comment>
<comment type="similarity">
    <text evidence="1">Belongs to the anthranilate phosphoribosyltransferase family.</text>
</comment>
<accession>Q5FNM7</accession>
<evidence type="ECO:0000255" key="1">
    <source>
        <dbReference type="HAMAP-Rule" id="MF_00211"/>
    </source>
</evidence>
<protein>
    <recommendedName>
        <fullName evidence="1">Anthranilate phosphoribosyltransferase</fullName>
        <ecNumber evidence="1">2.4.2.18</ecNumber>
    </recommendedName>
</protein>
<organism>
    <name type="scientific">Gluconobacter oxydans (strain 621H)</name>
    <name type="common">Gluconobacter suboxydans</name>
    <dbReference type="NCBI Taxonomy" id="290633"/>
    <lineage>
        <taxon>Bacteria</taxon>
        <taxon>Pseudomonadati</taxon>
        <taxon>Pseudomonadota</taxon>
        <taxon>Alphaproteobacteria</taxon>
        <taxon>Acetobacterales</taxon>
        <taxon>Acetobacteraceae</taxon>
        <taxon>Gluconobacter</taxon>
    </lineage>
</organism>
<proteinExistence type="inferred from homology"/>